<organism>
    <name type="scientific">Yersinia enterocolitica serotype O:8 / biotype 1B (strain NCTC 13174 / 8081)</name>
    <dbReference type="NCBI Taxonomy" id="393305"/>
    <lineage>
        <taxon>Bacteria</taxon>
        <taxon>Pseudomonadati</taxon>
        <taxon>Pseudomonadota</taxon>
        <taxon>Gammaproteobacteria</taxon>
        <taxon>Enterobacterales</taxon>
        <taxon>Yersiniaceae</taxon>
        <taxon>Yersinia</taxon>
    </lineage>
</organism>
<sequence>MAVQQNKPTRSKRGMRRSHDALTTATLSVDKTSGETHLRHHITADGFYRGRKVIG</sequence>
<comment type="similarity">
    <text evidence="1">Belongs to the bacterial ribosomal protein bL32 family.</text>
</comment>
<feature type="chain" id="PRO_0000296599" description="Large ribosomal subunit protein bL32">
    <location>
        <begin position="1"/>
        <end position="55"/>
    </location>
</feature>
<feature type="region of interest" description="Disordered" evidence="2">
    <location>
        <begin position="1"/>
        <end position="27"/>
    </location>
</feature>
<proteinExistence type="inferred from homology"/>
<evidence type="ECO:0000255" key="1">
    <source>
        <dbReference type="HAMAP-Rule" id="MF_00340"/>
    </source>
</evidence>
<evidence type="ECO:0000256" key="2">
    <source>
        <dbReference type="SAM" id="MobiDB-lite"/>
    </source>
</evidence>
<evidence type="ECO:0000305" key="3"/>
<dbReference type="EMBL" id="AM286415">
    <property type="protein sequence ID" value="CAL11705.1"/>
    <property type="molecule type" value="Genomic_DNA"/>
</dbReference>
<dbReference type="RefSeq" id="WP_002210931.1">
    <property type="nucleotide sequence ID" value="NC_008800.1"/>
</dbReference>
<dbReference type="RefSeq" id="YP_001005920.1">
    <property type="nucleotide sequence ID" value="NC_008800.1"/>
</dbReference>
<dbReference type="SMR" id="A1JN60"/>
<dbReference type="GeneID" id="97455787"/>
<dbReference type="KEGG" id="yen:YE1631"/>
<dbReference type="PATRIC" id="fig|393305.7.peg.1769"/>
<dbReference type="eggNOG" id="COG0333">
    <property type="taxonomic scope" value="Bacteria"/>
</dbReference>
<dbReference type="HOGENOM" id="CLU_129084_2_1_6"/>
<dbReference type="OrthoDB" id="9801927at2"/>
<dbReference type="PRO" id="PR:A1JN60"/>
<dbReference type="Proteomes" id="UP000000642">
    <property type="component" value="Chromosome"/>
</dbReference>
<dbReference type="GO" id="GO:0015934">
    <property type="term" value="C:large ribosomal subunit"/>
    <property type="evidence" value="ECO:0007669"/>
    <property type="project" value="InterPro"/>
</dbReference>
<dbReference type="GO" id="GO:0003735">
    <property type="term" value="F:structural constituent of ribosome"/>
    <property type="evidence" value="ECO:0007669"/>
    <property type="project" value="InterPro"/>
</dbReference>
<dbReference type="GO" id="GO:0006412">
    <property type="term" value="P:translation"/>
    <property type="evidence" value="ECO:0007669"/>
    <property type="project" value="UniProtKB-UniRule"/>
</dbReference>
<dbReference type="HAMAP" id="MF_00340">
    <property type="entry name" value="Ribosomal_bL32"/>
    <property type="match status" value="1"/>
</dbReference>
<dbReference type="InterPro" id="IPR002677">
    <property type="entry name" value="Ribosomal_bL32"/>
</dbReference>
<dbReference type="InterPro" id="IPR044957">
    <property type="entry name" value="Ribosomal_bL32_bact"/>
</dbReference>
<dbReference type="InterPro" id="IPR011332">
    <property type="entry name" value="Ribosomal_zn-bd"/>
</dbReference>
<dbReference type="NCBIfam" id="TIGR01031">
    <property type="entry name" value="rpmF_bact"/>
    <property type="match status" value="1"/>
</dbReference>
<dbReference type="PANTHER" id="PTHR35534">
    <property type="entry name" value="50S RIBOSOMAL PROTEIN L32"/>
    <property type="match status" value="1"/>
</dbReference>
<dbReference type="PANTHER" id="PTHR35534:SF1">
    <property type="entry name" value="LARGE RIBOSOMAL SUBUNIT PROTEIN BL32"/>
    <property type="match status" value="1"/>
</dbReference>
<dbReference type="Pfam" id="PF01783">
    <property type="entry name" value="Ribosomal_L32p"/>
    <property type="match status" value="1"/>
</dbReference>
<dbReference type="SUPFAM" id="SSF57829">
    <property type="entry name" value="Zn-binding ribosomal proteins"/>
    <property type="match status" value="1"/>
</dbReference>
<name>RL32_YERE8</name>
<gene>
    <name evidence="1" type="primary">rpmF</name>
    <name type="ordered locus">YE1631</name>
</gene>
<keyword id="KW-0687">Ribonucleoprotein</keyword>
<keyword id="KW-0689">Ribosomal protein</keyword>
<protein>
    <recommendedName>
        <fullName evidence="1">Large ribosomal subunit protein bL32</fullName>
    </recommendedName>
    <alternativeName>
        <fullName evidence="3">50S ribosomal protein L32</fullName>
    </alternativeName>
</protein>
<accession>A1JN60</accession>
<reference key="1">
    <citation type="journal article" date="2006" name="PLoS Genet.">
        <title>The complete genome sequence and comparative genome analysis of the high pathogenicity Yersinia enterocolitica strain 8081.</title>
        <authorList>
            <person name="Thomson N.R."/>
            <person name="Howard S."/>
            <person name="Wren B.W."/>
            <person name="Holden M.T.G."/>
            <person name="Crossman L."/>
            <person name="Challis G.L."/>
            <person name="Churcher C."/>
            <person name="Mungall K."/>
            <person name="Brooks K."/>
            <person name="Chillingworth T."/>
            <person name="Feltwell T."/>
            <person name="Abdellah Z."/>
            <person name="Hauser H."/>
            <person name="Jagels K."/>
            <person name="Maddison M."/>
            <person name="Moule S."/>
            <person name="Sanders M."/>
            <person name="Whitehead S."/>
            <person name="Quail M.A."/>
            <person name="Dougan G."/>
            <person name="Parkhill J."/>
            <person name="Prentice M.B."/>
        </authorList>
    </citation>
    <scope>NUCLEOTIDE SEQUENCE [LARGE SCALE GENOMIC DNA]</scope>
    <source>
        <strain>NCTC 13174 / 8081</strain>
    </source>
</reference>